<feature type="chain" id="PRO_0000173723" description="Arginase">
    <location>
        <begin position="1"/>
        <end position="302"/>
    </location>
</feature>
<feature type="binding site" evidence="3">
    <location>
        <position position="103"/>
    </location>
    <ligand>
        <name>Mn(2+)</name>
        <dbReference type="ChEBI" id="CHEBI:29035"/>
        <label>1</label>
    </ligand>
</feature>
<feature type="binding site" evidence="3">
    <location>
        <position position="126"/>
    </location>
    <ligand>
        <name>Mn(2+)</name>
        <dbReference type="ChEBI" id="CHEBI:29035"/>
        <label>1</label>
    </ligand>
</feature>
<feature type="binding site" evidence="3">
    <location>
        <position position="126"/>
    </location>
    <ligand>
        <name>Mn(2+)</name>
        <dbReference type="ChEBI" id="CHEBI:29035"/>
        <label>2</label>
    </ligand>
</feature>
<feature type="binding site" evidence="2">
    <location>
        <begin position="128"/>
        <end position="132"/>
    </location>
    <ligand>
        <name>substrate</name>
    </ligand>
</feature>
<feature type="binding site" evidence="3">
    <location>
        <position position="128"/>
    </location>
    <ligand>
        <name>Mn(2+)</name>
        <dbReference type="ChEBI" id="CHEBI:29035"/>
        <label>2</label>
    </ligand>
</feature>
<feature type="binding site" evidence="3">
    <location>
        <position position="130"/>
    </location>
    <ligand>
        <name>Mn(2+)</name>
        <dbReference type="ChEBI" id="CHEBI:29035"/>
        <label>1</label>
    </ligand>
</feature>
<feature type="binding site" evidence="2">
    <location>
        <begin position="139"/>
        <end position="141"/>
    </location>
    <ligand>
        <name>substrate</name>
    </ligand>
</feature>
<feature type="binding site" evidence="2">
    <location>
        <position position="180"/>
    </location>
    <ligand>
        <name>substrate</name>
    </ligand>
</feature>
<feature type="binding site" evidence="3">
    <location>
        <position position="229"/>
    </location>
    <ligand>
        <name>Mn(2+)</name>
        <dbReference type="ChEBI" id="CHEBI:29035"/>
        <label>1</label>
    </ligand>
</feature>
<feature type="binding site" evidence="3">
    <location>
        <position position="229"/>
    </location>
    <ligand>
        <name>Mn(2+)</name>
        <dbReference type="ChEBI" id="CHEBI:29035"/>
        <label>2</label>
    </ligand>
</feature>
<feature type="binding site" evidence="3">
    <location>
        <position position="231"/>
    </location>
    <ligand>
        <name>Mn(2+)</name>
        <dbReference type="ChEBI" id="CHEBI:29035"/>
        <label>2</label>
    </ligand>
</feature>
<feature type="binding site" evidence="2">
    <location>
        <position position="243"/>
    </location>
    <ligand>
        <name>substrate</name>
    </ligand>
</feature>
<feature type="binding site" evidence="2">
    <location>
        <position position="274"/>
    </location>
    <ligand>
        <name>substrate</name>
    </ligand>
</feature>
<reference key="1">
    <citation type="journal article" date="2004" name="Proc. Natl. Acad. Sci. U.S.A.">
        <title>Complete genomes of two clinical Staphylococcus aureus strains: evidence for the rapid evolution of virulence and drug resistance.</title>
        <authorList>
            <person name="Holden M.T.G."/>
            <person name="Feil E.J."/>
            <person name="Lindsay J.A."/>
            <person name="Peacock S.J."/>
            <person name="Day N.P.J."/>
            <person name="Enright M.C."/>
            <person name="Foster T.J."/>
            <person name="Moore C.E."/>
            <person name="Hurst L."/>
            <person name="Atkin R."/>
            <person name="Barron A."/>
            <person name="Bason N."/>
            <person name="Bentley S.D."/>
            <person name="Chillingworth C."/>
            <person name="Chillingworth T."/>
            <person name="Churcher C."/>
            <person name="Clark L."/>
            <person name="Corton C."/>
            <person name="Cronin A."/>
            <person name="Doggett J."/>
            <person name="Dowd L."/>
            <person name="Feltwell T."/>
            <person name="Hance Z."/>
            <person name="Harris B."/>
            <person name="Hauser H."/>
            <person name="Holroyd S."/>
            <person name="Jagels K."/>
            <person name="James K.D."/>
            <person name="Lennard N."/>
            <person name="Line A."/>
            <person name="Mayes R."/>
            <person name="Moule S."/>
            <person name="Mungall K."/>
            <person name="Ormond D."/>
            <person name="Quail M.A."/>
            <person name="Rabbinowitsch E."/>
            <person name="Rutherford K.M."/>
            <person name="Sanders M."/>
            <person name="Sharp S."/>
            <person name="Simmonds M."/>
            <person name="Stevens K."/>
            <person name="Whitehead S."/>
            <person name="Barrell B.G."/>
            <person name="Spratt B.G."/>
            <person name="Parkhill J."/>
        </authorList>
    </citation>
    <scope>NUCLEOTIDE SEQUENCE [LARGE SCALE GENOMIC DNA]</scope>
    <source>
        <strain>MSSA476</strain>
    </source>
</reference>
<gene>
    <name type="primary">arg</name>
    <name type="ordered locus">SAS2066</name>
</gene>
<comment type="catalytic activity">
    <reaction evidence="1">
        <text>L-arginine + H2O = urea + L-ornithine</text>
        <dbReference type="Rhea" id="RHEA:20569"/>
        <dbReference type="ChEBI" id="CHEBI:15377"/>
        <dbReference type="ChEBI" id="CHEBI:16199"/>
        <dbReference type="ChEBI" id="CHEBI:32682"/>
        <dbReference type="ChEBI" id="CHEBI:46911"/>
        <dbReference type="EC" id="3.5.3.1"/>
    </reaction>
</comment>
<comment type="cofactor">
    <cofactor evidence="3">
        <name>Mn(2+)</name>
        <dbReference type="ChEBI" id="CHEBI:29035"/>
    </cofactor>
    <text evidence="3">Binds 2 manganese ions per subunit.</text>
</comment>
<comment type="pathway">
    <text evidence="1">Nitrogen metabolism; urea cycle; L-ornithine and urea from L-arginine: step 1/1.</text>
</comment>
<comment type="similarity">
    <text evidence="3">Belongs to the arginase family.</text>
</comment>
<keyword id="KW-0056">Arginine metabolism</keyword>
<keyword id="KW-0378">Hydrolase</keyword>
<keyword id="KW-0464">Manganese</keyword>
<keyword id="KW-0479">Metal-binding</keyword>
<protein>
    <recommendedName>
        <fullName>Arginase</fullName>
        <ecNumber evidence="1">3.5.3.1</ecNumber>
    </recommendedName>
</protein>
<proteinExistence type="inferred from homology"/>
<evidence type="ECO:0000250" key="1">
    <source>
        <dbReference type="UniProtKB" id="P05089"/>
    </source>
</evidence>
<evidence type="ECO:0000250" key="2">
    <source>
        <dbReference type="UniProtKB" id="P53608"/>
    </source>
</evidence>
<evidence type="ECO:0000255" key="3">
    <source>
        <dbReference type="PROSITE-ProRule" id="PRU00742"/>
    </source>
</evidence>
<name>ARGI_STAAS</name>
<organism>
    <name type="scientific">Staphylococcus aureus (strain MSSA476)</name>
    <dbReference type="NCBI Taxonomy" id="282459"/>
    <lineage>
        <taxon>Bacteria</taxon>
        <taxon>Bacillati</taxon>
        <taxon>Bacillota</taxon>
        <taxon>Bacilli</taxon>
        <taxon>Bacillales</taxon>
        <taxon>Staphylococcaceae</taxon>
        <taxon>Staphylococcus</taxon>
    </lineage>
</organism>
<dbReference type="EC" id="3.5.3.1" evidence="1"/>
<dbReference type="EMBL" id="BX571857">
    <property type="protein sequence ID" value="CAG43874.1"/>
    <property type="molecule type" value="Genomic_DNA"/>
</dbReference>
<dbReference type="SMR" id="Q6G7E9"/>
<dbReference type="KEGG" id="sas:SAS2066"/>
<dbReference type="HOGENOM" id="CLU_039478_6_2_9"/>
<dbReference type="UniPathway" id="UPA00158">
    <property type="reaction ID" value="UER00270"/>
</dbReference>
<dbReference type="GO" id="GO:0005737">
    <property type="term" value="C:cytoplasm"/>
    <property type="evidence" value="ECO:0007669"/>
    <property type="project" value="TreeGrafter"/>
</dbReference>
<dbReference type="GO" id="GO:0004053">
    <property type="term" value="F:arginase activity"/>
    <property type="evidence" value="ECO:0007669"/>
    <property type="project" value="UniProtKB-EC"/>
</dbReference>
<dbReference type="GO" id="GO:0030145">
    <property type="term" value="F:manganese ion binding"/>
    <property type="evidence" value="ECO:0007669"/>
    <property type="project" value="TreeGrafter"/>
</dbReference>
<dbReference type="GO" id="GO:0019547">
    <property type="term" value="P:arginine catabolic process to ornithine"/>
    <property type="evidence" value="ECO:0007669"/>
    <property type="project" value="TreeGrafter"/>
</dbReference>
<dbReference type="GO" id="GO:0000050">
    <property type="term" value="P:urea cycle"/>
    <property type="evidence" value="ECO:0007669"/>
    <property type="project" value="UniProtKB-UniPathway"/>
</dbReference>
<dbReference type="CDD" id="cd09989">
    <property type="entry name" value="Arginase"/>
    <property type="match status" value="1"/>
</dbReference>
<dbReference type="FunFam" id="3.40.800.10:FF:000005">
    <property type="entry name" value="Arginase"/>
    <property type="match status" value="1"/>
</dbReference>
<dbReference type="Gene3D" id="3.40.800.10">
    <property type="entry name" value="Ureohydrolase domain"/>
    <property type="match status" value="1"/>
</dbReference>
<dbReference type="InterPro" id="IPR014033">
    <property type="entry name" value="Arginase"/>
</dbReference>
<dbReference type="InterPro" id="IPR006035">
    <property type="entry name" value="Ureohydrolase"/>
</dbReference>
<dbReference type="InterPro" id="IPR023696">
    <property type="entry name" value="Ureohydrolase_dom_sf"/>
</dbReference>
<dbReference type="InterPro" id="IPR020855">
    <property type="entry name" value="Ureohydrolase_Mn_BS"/>
</dbReference>
<dbReference type="NCBIfam" id="TIGR01229">
    <property type="entry name" value="rocF_arginase"/>
    <property type="match status" value="1"/>
</dbReference>
<dbReference type="PANTHER" id="PTHR43782">
    <property type="entry name" value="ARGINASE"/>
    <property type="match status" value="1"/>
</dbReference>
<dbReference type="PANTHER" id="PTHR43782:SF3">
    <property type="entry name" value="ARGINASE"/>
    <property type="match status" value="1"/>
</dbReference>
<dbReference type="Pfam" id="PF00491">
    <property type="entry name" value="Arginase"/>
    <property type="match status" value="1"/>
</dbReference>
<dbReference type="PIRSF" id="PIRSF036979">
    <property type="entry name" value="Arginase"/>
    <property type="match status" value="1"/>
</dbReference>
<dbReference type="PRINTS" id="PR00116">
    <property type="entry name" value="ARGINASE"/>
</dbReference>
<dbReference type="SUPFAM" id="SSF52768">
    <property type="entry name" value="Arginase/deacetylase"/>
    <property type="match status" value="1"/>
</dbReference>
<dbReference type="PROSITE" id="PS01053">
    <property type="entry name" value="ARGINASE_1"/>
    <property type="match status" value="1"/>
</dbReference>
<dbReference type="PROSITE" id="PS51409">
    <property type="entry name" value="ARGINASE_2"/>
    <property type="match status" value="1"/>
</dbReference>
<sequence length="302" mass="33293">MTKTKAIDIIGAPSTFGQRKLGVDLGPTAIRYAGLISRLKQLDLDVYDKGDIKVPVVNIEKFHSEQKGLRNYDEIIDVNQKLNKEVSASIENNRFPLVLGGDHSIAVGSVSAISKHYNNLGVIWYDAHGDLNIPEESPSGNIHGMPLRILTGEGPKELLELNSNVIKPENIVLIGMRDLDKGERQFIKDHNIKTFTMSDIDKLGIKEVIENTIEYLKSRNVDGVHLSLDVDALDPLETPGTGTRVLGGLSYRESHFALELLHQSHLISSMDLVEVNPLIDSNNHTAEQAVSLVGTFFGETLL</sequence>
<accession>Q6G7E9</accession>